<keyword id="KW-0150">Chloroplast</keyword>
<keyword id="KW-0934">Plastid</keyword>
<keyword id="KW-1185">Reference proteome</keyword>
<keyword id="KW-0687">Ribonucleoprotein</keyword>
<keyword id="KW-0689">Ribosomal protein</keyword>
<reference key="1">
    <citation type="journal article" date="2007" name="Mol. Biol. Evol.">
        <title>The complete chloroplast and mitochondrial DNA sequence of Ostreococcus tauri: organelle genomes of the smallest eukaryote are examples of compaction.</title>
        <authorList>
            <person name="Robbens S."/>
            <person name="Derelle E."/>
            <person name="Ferraz C."/>
            <person name="Wuyts J."/>
            <person name="Moreau H."/>
            <person name="Van de Peer Y."/>
        </authorList>
    </citation>
    <scope>NUCLEOTIDE SEQUENCE [LARGE SCALE GENOMIC DNA]</scope>
    <source>
        <strain>OTTH0595</strain>
    </source>
</reference>
<sequence>MAVPKRRQSNAQSGMRAATWKRKALDAARNALSLGKSLTTRKSTGFYYPPAPVSENWDDEAKGFGKDLDAAE</sequence>
<comment type="subcellular location">
    <subcellularLocation>
        <location>Plastid</location>
        <location>Chloroplast</location>
    </subcellularLocation>
</comment>
<comment type="similarity">
    <text evidence="1">Belongs to the bacterial ribosomal protein bL32 family.</text>
</comment>
<evidence type="ECO:0000255" key="1">
    <source>
        <dbReference type="HAMAP-Rule" id="MF_00340"/>
    </source>
</evidence>
<evidence type="ECO:0000256" key="2">
    <source>
        <dbReference type="SAM" id="MobiDB-lite"/>
    </source>
</evidence>
<evidence type="ECO:0000305" key="3"/>
<organism>
    <name type="scientific">Ostreococcus tauri</name>
    <dbReference type="NCBI Taxonomy" id="70448"/>
    <lineage>
        <taxon>Eukaryota</taxon>
        <taxon>Viridiplantae</taxon>
        <taxon>Chlorophyta</taxon>
        <taxon>Mamiellophyceae</taxon>
        <taxon>Mamiellales</taxon>
        <taxon>Bathycoccaceae</taxon>
        <taxon>Ostreococcus</taxon>
    </lineage>
</organism>
<accession>Q0P3P5</accession>
<gene>
    <name evidence="1" type="primary">rpl32</name>
    <name type="ordered locus">OtCpg00070</name>
</gene>
<dbReference type="EMBL" id="CR954199">
    <property type="protein sequence ID" value="CAL36332.1"/>
    <property type="molecule type" value="Genomic_DNA"/>
</dbReference>
<dbReference type="RefSeq" id="YP_717210.1">
    <property type="nucleotide sequence ID" value="NC_008289.1"/>
</dbReference>
<dbReference type="SMR" id="Q0P3P5"/>
<dbReference type="FunCoup" id="Q0P3P5">
    <property type="interactions" value="196"/>
</dbReference>
<dbReference type="GeneID" id="4238794"/>
<dbReference type="KEGG" id="ota:OstapCp07"/>
<dbReference type="InParanoid" id="Q0P3P5"/>
<dbReference type="Proteomes" id="UP000009170">
    <property type="component" value="Chloroplast"/>
</dbReference>
<dbReference type="GO" id="GO:0009507">
    <property type="term" value="C:chloroplast"/>
    <property type="evidence" value="ECO:0007669"/>
    <property type="project" value="UniProtKB-SubCell"/>
</dbReference>
<dbReference type="GO" id="GO:0015934">
    <property type="term" value="C:large ribosomal subunit"/>
    <property type="evidence" value="ECO:0007669"/>
    <property type="project" value="InterPro"/>
</dbReference>
<dbReference type="GO" id="GO:0003735">
    <property type="term" value="F:structural constituent of ribosome"/>
    <property type="evidence" value="ECO:0007669"/>
    <property type="project" value="InterPro"/>
</dbReference>
<dbReference type="GO" id="GO:0006412">
    <property type="term" value="P:translation"/>
    <property type="evidence" value="ECO:0007669"/>
    <property type="project" value="UniProtKB-UniRule"/>
</dbReference>
<dbReference type="HAMAP" id="MF_00340">
    <property type="entry name" value="Ribosomal_bL32"/>
    <property type="match status" value="1"/>
</dbReference>
<dbReference type="InterPro" id="IPR002677">
    <property type="entry name" value="Ribosomal_bL32"/>
</dbReference>
<dbReference type="InterPro" id="IPR044958">
    <property type="entry name" value="Ribosomal_bL32_plant/cyanobact"/>
</dbReference>
<dbReference type="PANTHER" id="PTHR36083">
    <property type="entry name" value="50S RIBOSOMAL PROTEIN L32, CHLOROPLASTIC"/>
    <property type="match status" value="1"/>
</dbReference>
<dbReference type="PANTHER" id="PTHR36083:SF1">
    <property type="entry name" value="LARGE RIBOSOMAL SUBUNIT PROTEIN BL32C"/>
    <property type="match status" value="1"/>
</dbReference>
<dbReference type="Pfam" id="PF01783">
    <property type="entry name" value="Ribosomal_L32p"/>
    <property type="match status" value="1"/>
</dbReference>
<name>RK32_OSTTA</name>
<feature type="chain" id="PRO_0000276481" description="Large ribosomal subunit protein bL32c">
    <location>
        <begin position="1"/>
        <end position="72"/>
    </location>
</feature>
<feature type="region of interest" description="Disordered" evidence="2">
    <location>
        <begin position="49"/>
        <end position="72"/>
    </location>
</feature>
<feature type="compositionally biased region" description="Basic and acidic residues" evidence="2">
    <location>
        <begin position="59"/>
        <end position="72"/>
    </location>
</feature>
<geneLocation type="chloroplast"/>
<proteinExistence type="inferred from homology"/>
<protein>
    <recommendedName>
        <fullName evidence="1">Large ribosomal subunit protein bL32c</fullName>
    </recommendedName>
    <alternativeName>
        <fullName evidence="3">50S ribosomal protein L32, chloroplastic</fullName>
    </alternativeName>
</protein>